<sequence length="85" mass="9933">MILALGDFLPKQEDKACERPWVQFPARPVIFFHHQGGIFLFSINQPNLSCFSKLKEVNSLYVRVATYICQKNESRFRTNRLKGDQ</sequence>
<keyword id="KW-1185">Reference proteome</keyword>
<dbReference type="EMBL" id="Z71320">
    <property type="status" value="NOT_ANNOTATED_CDS"/>
    <property type="molecule type" value="Genomic_DNA"/>
</dbReference>
<dbReference type="EMBL" id="BK006947">
    <property type="protein sequence ID" value="DAA10502.1"/>
    <property type="molecule type" value="Genomic_DNA"/>
</dbReference>
<dbReference type="RefSeq" id="NP_878157.3">
    <property type="nucleotide sequence ID" value="NM_001184662.3"/>
</dbReference>
<dbReference type="BioGRID" id="37057">
    <property type="interactions" value="36"/>
</dbReference>
<dbReference type="FunCoup" id="Q3E7Z2">
    <property type="interactions" value="10"/>
</dbReference>
<dbReference type="STRING" id="4932.YNL042W-B"/>
<dbReference type="PaxDb" id="4932-YNL042W-B"/>
<dbReference type="EnsemblFungi" id="YNL042W-B_mRNA">
    <property type="protein sequence ID" value="YNL042W-B"/>
    <property type="gene ID" value="YNL042W-B"/>
</dbReference>
<dbReference type="GeneID" id="1466515"/>
<dbReference type="KEGG" id="sce:YNL042W-B"/>
<dbReference type="AGR" id="SGD:S000028850"/>
<dbReference type="SGD" id="S000028850">
    <property type="gene designation" value="YNL042W-B"/>
</dbReference>
<dbReference type="VEuPathDB" id="FungiDB:YNL042W-B"/>
<dbReference type="HOGENOM" id="CLU_2514374_0_0_1"/>
<dbReference type="InParanoid" id="Q3E7Z2"/>
<dbReference type="OrthoDB" id="10315943at2759"/>
<dbReference type="BioCyc" id="YEAST:G3O-33414-MONOMER"/>
<dbReference type="BioGRID-ORCS" id="1466515">
    <property type="hits" value="3 hits in 10 CRISPR screens"/>
</dbReference>
<dbReference type="PRO" id="PR:Q3E7Z2"/>
<dbReference type="Proteomes" id="UP000002311">
    <property type="component" value="Chromosome XIV"/>
</dbReference>
<dbReference type="RNAct" id="Q3E7Z2">
    <property type="molecule type" value="protein"/>
</dbReference>
<accession>Q3E7Z2</accession>
<accession>D6W1D6</accession>
<protein>
    <recommendedName>
        <fullName>Uncharacterized protein YNL042W-B</fullName>
    </recommendedName>
</protein>
<reference key="1">
    <citation type="journal article" date="1997" name="Nature">
        <title>The nucleotide sequence of Saccharomyces cerevisiae chromosome XIV and its evolutionary implications.</title>
        <authorList>
            <person name="Philippsen P."/>
            <person name="Kleine K."/>
            <person name="Poehlmann R."/>
            <person name="Duesterhoeft A."/>
            <person name="Hamberg K."/>
            <person name="Hegemann J.H."/>
            <person name="Obermaier B."/>
            <person name="Urrestarazu L.A."/>
            <person name="Aert R."/>
            <person name="Albermann K."/>
            <person name="Altmann R."/>
            <person name="Andre B."/>
            <person name="Baladron V."/>
            <person name="Ballesta J.P.G."/>
            <person name="Becam A.-M."/>
            <person name="Beinhauer J.D."/>
            <person name="Boskovic J."/>
            <person name="Buitrago M.J."/>
            <person name="Bussereau F."/>
            <person name="Coster F."/>
            <person name="Crouzet M."/>
            <person name="D'Angelo M."/>
            <person name="Dal Pero F."/>
            <person name="De Antoni A."/>
            <person name="del Rey F."/>
            <person name="Doignon F."/>
            <person name="Domdey H."/>
            <person name="Dubois E."/>
            <person name="Fiedler T.A."/>
            <person name="Fleig U."/>
            <person name="Floeth M."/>
            <person name="Fritz C."/>
            <person name="Gaillardin C."/>
            <person name="Garcia-Cantalejo J.M."/>
            <person name="Glansdorff N."/>
            <person name="Goffeau A."/>
            <person name="Gueldener U."/>
            <person name="Herbert C.J."/>
            <person name="Heumann K."/>
            <person name="Heuss-Neitzel D."/>
            <person name="Hilbert H."/>
            <person name="Hinni K."/>
            <person name="Iraqui Houssaini I."/>
            <person name="Jacquet M."/>
            <person name="Jimenez A."/>
            <person name="Jonniaux J.-L."/>
            <person name="Karpfinger-Hartl L."/>
            <person name="Lanfranchi G."/>
            <person name="Lepingle A."/>
            <person name="Levesque H."/>
            <person name="Lyck R."/>
            <person name="Maftahi M."/>
            <person name="Mallet L."/>
            <person name="Maurer C.T.C."/>
            <person name="Messenguy F."/>
            <person name="Mewes H.-W."/>
            <person name="Moestl D."/>
            <person name="Nasr F."/>
            <person name="Nicaud J.-M."/>
            <person name="Niedenthal R.K."/>
            <person name="Pandolfo D."/>
            <person name="Pierard A."/>
            <person name="Piravandi E."/>
            <person name="Planta R.J."/>
            <person name="Pohl T.M."/>
            <person name="Purnelle B."/>
            <person name="Rebischung C."/>
            <person name="Remacha M.A."/>
            <person name="Revuelta J.L."/>
            <person name="Rinke M."/>
            <person name="Saiz J.E."/>
            <person name="Sartorello F."/>
            <person name="Scherens B."/>
            <person name="Sen-Gupta M."/>
            <person name="Soler-Mira A."/>
            <person name="Urbanus J.H.M."/>
            <person name="Valle G."/>
            <person name="Van Dyck L."/>
            <person name="Verhasselt P."/>
            <person name="Vierendeels F."/>
            <person name="Vissers S."/>
            <person name="Voet M."/>
            <person name="Volckaert G."/>
            <person name="Wach A."/>
            <person name="Wambutt R."/>
            <person name="Wedler H."/>
            <person name="Zollner A."/>
            <person name="Hani J."/>
        </authorList>
    </citation>
    <scope>NUCLEOTIDE SEQUENCE [LARGE SCALE GENOMIC DNA]</scope>
    <source>
        <strain>ATCC 204508 / S288c</strain>
    </source>
</reference>
<reference key="2">
    <citation type="journal article" date="2014" name="G3 (Bethesda)">
        <title>The reference genome sequence of Saccharomyces cerevisiae: Then and now.</title>
        <authorList>
            <person name="Engel S.R."/>
            <person name="Dietrich F.S."/>
            <person name="Fisk D.G."/>
            <person name="Binkley G."/>
            <person name="Balakrishnan R."/>
            <person name="Costanzo M.C."/>
            <person name="Dwight S.S."/>
            <person name="Hitz B.C."/>
            <person name="Karra K."/>
            <person name="Nash R.S."/>
            <person name="Weng S."/>
            <person name="Wong E.D."/>
            <person name="Lloyd P."/>
            <person name="Skrzypek M.S."/>
            <person name="Miyasato S.R."/>
            <person name="Simison M."/>
            <person name="Cherry J.M."/>
        </authorList>
    </citation>
    <scope>GENOME REANNOTATION</scope>
    <source>
        <strain>ATCC 204508 / S288c</strain>
    </source>
</reference>
<reference key="3">
    <citation type="journal article" date="2002" name="Genome Res.">
        <title>Parallel identification of new genes in Saccharomyces cerevisiae.</title>
        <authorList>
            <person name="Oshiro G."/>
            <person name="Wodicka L.M."/>
            <person name="Washburn M.P."/>
            <person name="Yates J.R. III"/>
            <person name="Lockhart D.J."/>
            <person name="Winzeler E.A."/>
        </authorList>
    </citation>
    <scope>IDENTIFICATION BY MASS SPECTROMETRY</scope>
</reference>
<gene>
    <name type="ordered locus">YNL042W-B</name>
</gene>
<proteinExistence type="evidence at protein level"/>
<feature type="chain" id="PRO_0000247802" description="Uncharacterized protein YNL042W-B">
    <location>
        <begin position="1"/>
        <end position="85"/>
    </location>
</feature>
<name>YN042_YEAST</name>
<organism>
    <name type="scientific">Saccharomyces cerevisiae (strain ATCC 204508 / S288c)</name>
    <name type="common">Baker's yeast</name>
    <dbReference type="NCBI Taxonomy" id="559292"/>
    <lineage>
        <taxon>Eukaryota</taxon>
        <taxon>Fungi</taxon>
        <taxon>Dikarya</taxon>
        <taxon>Ascomycota</taxon>
        <taxon>Saccharomycotina</taxon>
        <taxon>Saccharomycetes</taxon>
        <taxon>Saccharomycetales</taxon>
        <taxon>Saccharomycetaceae</taxon>
        <taxon>Saccharomyces</taxon>
    </lineage>
</organism>